<feature type="chain" id="PRO_1000071704" description="GTPase Der">
    <location>
        <begin position="1"/>
        <end position="473"/>
    </location>
</feature>
<feature type="domain" description="EngA-type G 1">
    <location>
        <begin position="3"/>
        <end position="167"/>
    </location>
</feature>
<feature type="domain" description="EngA-type G 2">
    <location>
        <begin position="203"/>
        <end position="378"/>
    </location>
</feature>
<feature type="domain" description="KH-like" evidence="1">
    <location>
        <begin position="379"/>
        <end position="463"/>
    </location>
</feature>
<feature type="binding site" evidence="1">
    <location>
        <begin position="9"/>
        <end position="16"/>
    </location>
    <ligand>
        <name>GTP</name>
        <dbReference type="ChEBI" id="CHEBI:37565"/>
        <label>1</label>
    </ligand>
</feature>
<feature type="binding site" evidence="1">
    <location>
        <begin position="56"/>
        <end position="60"/>
    </location>
    <ligand>
        <name>GTP</name>
        <dbReference type="ChEBI" id="CHEBI:37565"/>
        <label>1</label>
    </ligand>
</feature>
<feature type="binding site" evidence="1">
    <location>
        <begin position="119"/>
        <end position="122"/>
    </location>
    <ligand>
        <name>GTP</name>
        <dbReference type="ChEBI" id="CHEBI:37565"/>
        <label>1</label>
    </ligand>
</feature>
<feature type="binding site" evidence="1">
    <location>
        <begin position="209"/>
        <end position="216"/>
    </location>
    <ligand>
        <name>GTP</name>
        <dbReference type="ChEBI" id="CHEBI:37565"/>
        <label>2</label>
    </ligand>
</feature>
<feature type="binding site" evidence="1">
    <location>
        <begin position="256"/>
        <end position="260"/>
    </location>
    <ligand>
        <name>GTP</name>
        <dbReference type="ChEBI" id="CHEBI:37565"/>
        <label>2</label>
    </ligand>
</feature>
<feature type="binding site" evidence="1">
    <location>
        <begin position="321"/>
        <end position="324"/>
    </location>
    <ligand>
        <name>GTP</name>
        <dbReference type="ChEBI" id="CHEBI:37565"/>
        <label>2</label>
    </ligand>
</feature>
<sequence length="473" mass="52164">MSFKVAIVGRPNVGKSTLFNRLVGKKLALVDDTPGVTRDRREGEARLGDLSFTIIDTAGLEEAATGTLEARMRIGTERAIADADLCLLLIDARAGVTPLDKSFSQILRKSPTPVILAANKCEGGAGKAGRMEAYELGLGAPLPLSAEHGEGLGDLYDALAQFAKGLEADDAGQAVEDALAEEQDADAGFDPDAPYEPDLEAPLRVAIIGRPNVGKSTLVNQLLGEDRMLTGPEAGITRDSIGIEWEWRGRRVKLWDTAGMRRRARVTEKLEKLSVADTLRAVRFAEVVVILLDATQPFERQDLHIADLVEQEGRGLLIVVNKWDMVAEPQEVLRVLKEELERLLPQIRGVPIVTLSALTGRGTDKLMPAIERVHTFWNARVPTARLNRWMQEAVSRHQPPAAHGRPVNLKYISQVKSRPPTFAVFSSRADDVPTSYRRYLVNGLRETFDLPGVPIRLFMRKTHNPYADRKKRS</sequence>
<dbReference type="EMBL" id="CP000774">
    <property type="protein sequence ID" value="ABS65091.1"/>
    <property type="molecule type" value="Genomic_DNA"/>
</dbReference>
<dbReference type="RefSeq" id="WP_012112404.1">
    <property type="nucleotide sequence ID" value="NC_009719.1"/>
</dbReference>
<dbReference type="SMR" id="A7HYV8"/>
<dbReference type="STRING" id="402881.Plav_3492"/>
<dbReference type="KEGG" id="pla:Plav_3492"/>
<dbReference type="eggNOG" id="COG1160">
    <property type="taxonomic scope" value="Bacteria"/>
</dbReference>
<dbReference type="HOGENOM" id="CLU_016077_5_0_5"/>
<dbReference type="OrthoDB" id="9805918at2"/>
<dbReference type="Proteomes" id="UP000006377">
    <property type="component" value="Chromosome"/>
</dbReference>
<dbReference type="GO" id="GO:0005525">
    <property type="term" value="F:GTP binding"/>
    <property type="evidence" value="ECO:0007669"/>
    <property type="project" value="UniProtKB-UniRule"/>
</dbReference>
<dbReference type="GO" id="GO:0042254">
    <property type="term" value="P:ribosome biogenesis"/>
    <property type="evidence" value="ECO:0007669"/>
    <property type="project" value="UniProtKB-KW"/>
</dbReference>
<dbReference type="CDD" id="cd01894">
    <property type="entry name" value="EngA1"/>
    <property type="match status" value="1"/>
</dbReference>
<dbReference type="CDD" id="cd01895">
    <property type="entry name" value="EngA2"/>
    <property type="match status" value="1"/>
</dbReference>
<dbReference type="FunFam" id="3.30.300.20:FF:000004">
    <property type="entry name" value="GTPase Der"/>
    <property type="match status" value="1"/>
</dbReference>
<dbReference type="FunFam" id="3.40.50.300:FF:000040">
    <property type="entry name" value="GTPase Der"/>
    <property type="match status" value="1"/>
</dbReference>
<dbReference type="Gene3D" id="3.30.300.20">
    <property type="match status" value="1"/>
</dbReference>
<dbReference type="Gene3D" id="3.40.50.300">
    <property type="entry name" value="P-loop containing nucleotide triphosphate hydrolases"/>
    <property type="match status" value="2"/>
</dbReference>
<dbReference type="HAMAP" id="MF_00195">
    <property type="entry name" value="GTPase_Der"/>
    <property type="match status" value="1"/>
</dbReference>
<dbReference type="InterPro" id="IPR031166">
    <property type="entry name" value="G_ENGA"/>
</dbReference>
<dbReference type="InterPro" id="IPR006073">
    <property type="entry name" value="GTP-bd"/>
</dbReference>
<dbReference type="InterPro" id="IPR016484">
    <property type="entry name" value="GTPase_Der"/>
</dbReference>
<dbReference type="InterPro" id="IPR032859">
    <property type="entry name" value="KH_dom-like"/>
</dbReference>
<dbReference type="InterPro" id="IPR015946">
    <property type="entry name" value="KH_dom-like_a/b"/>
</dbReference>
<dbReference type="InterPro" id="IPR027417">
    <property type="entry name" value="P-loop_NTPase"/>
</dbReference>
<dbReference type="InterPro" id="IPR005225">
    <property type="entry name" value="Small_GTP-bd"/>
</dbReference>
<dbReference type="NCBIfam" id="TIGR03594">
    <property type="entry name" value="GTPase_EngA"/>
    <property type="match status" value="1"/>
</dbReference>
<dbReference type="NCBIfam" id="TIGR00231">
    <property type="entry name" value="small_GTP"/>
    <property type="match status" value="2"/>
</dbReference>
<dbReference type="PANTHER" id="PTHR43834">
    <property type="entry name" value="GTPASE DER"/>
    <property type="match status" value="1"/>
</dbReference>
<dbReference type="PANTHER" id="PTHR43834:SF6">
    <property type="entry name" value="GTPASE DER"/>
    <property type="match status" value="1"/>
</dbReference>
<dbReference type="Pfam" id="PF14714">
    <property type="entry name" value="KH_dom-like"/>
    <property type="match status" value="1"/>
</dbReference>
<dbReference type="Pfam" id="PF01926">
    <property type="entry name" value="MMR_HSR1"/>
    <property type="match status" value="2"/>
</dbReference>
<dbReference type="PIRSF" id="PIRSF006485">
    <property type="entry name" value="GTP-binding_EngA"/>
    <property type="match status" value="1"/>
</dbReference>
<dbReference type="PRINTS" id="PR00326">
    <property type="entry name" value="GTP1OBG"/>
</dbReference>
<dbReference type="SUPFAM" id="SSF52540">
    <property type="entry name" value="P-loop containing nucleoside triphosphate hydrolases"/>
    <property type="match status" value="2"/>
</dbReference>
<dbReference type="PROSITE" id="PS51712">
    <property type="entry name" value="G_ENGA"/>
    <property type="match status" value="2"/>
</dbReference>
<reference key="1">
    <citation type="journal article" date="2011" name="Stand. Genomic Sci.">
        <title>Complete genome sequence of Parvibaculum lavamentivorans type strain (DS-1(T)).</title>
        <authorList>
            <person name="Schleheck D."/>
            <person name="Weiss M."/>
            <person name="Pitluck S."/>
            <person name="Bruce D."/>
            <person name="Land M.L."/>
            <person name="Han S."/>
            <person name="Saunders E."/>
            <person name="Tapia R."/>
            <person name="Detter C."/>
            <person name="Brettin T."/>
            <person name="Han J."/>
            <person name="Woyke T."/>
            <person name="Goodwin L."/>
            <person name="Pennacchio L."/>
            <person name="Nolan M."/>
            <person name="Cook A.M."/>
            <person name="Kjelleberg S."/>
            <person name="Thomas T."/>
        </authorList>
    </citation>
    <scope>NUCLEOTIDE SEQUENCE [LARGE SCALE GENOMIC DNA]</scope>
    <source>
        <strain>DS-1 / DSM 13023 / NCIMB 13966</strain>
    </source>
</reference>
<evidence type="ECO:0000255" key="1">
    <source>
        <dbReference type="HAMAP-Rule" id="MF_00195"/>
    </source>
</evidence>
<organism>
    <name type="scientific">Parvibaculum lavamentivorans (strain DS-1 / DSM 13023 / NCIMB 13966)</name>
    <dbReference type="NCBI Taxonomy" id="402881"/>
    <lineage>
        <taxon>Bacteria</taxon>
        <taxon>Pseudomonadati</taxon>
        <taxon>Pseudomonadota</taxon>
        <taxon>Alphaproteobacteria</taxon>
        <taxon>Hyphomicrobiales</taxon>
        <taxon>Parvibaculaceae</taxon>
        <taxon>Parvibaculum</taxon>
    </lineage>
</organism>
<proteinExistence type="inferred from homology"/>
<comment type="function">
    <text evidence="1">GTPase that plays an essential role in the late steps of ribosome biogenesis.</text>
</comment>
<comment type="subunit">
    <text evidence="1">Associates with the 50S ribosomal subunit.</text>
</comment>
<comment type="similarity">
    <text evidence="1">Belongs to the TRAFAC class TrmE-Era-EngA-EngB-Septin-like GTPase superfamily. EngA (Der) GTPase family.</text>
</comment>
<accession>A7HYV8</accession>
<protein>
    <recommendedName>
        <fullName evidence="1">GTPase Der</fullName>
    </recommendedName>
    <alternativeName>
        <fullName evidence="1">GTP-binding protein EngA</fullName>
    </alternativeName>
</protein>
<keyword id="KW-0342">GTP-binding</keyword>
<keyword id="KW-0547">Nucleotide-binding</keyword>
<keyword id="KW-1185">Reference proteome</keyword>
<keyword id="KW-0677">Repeat</keyword>
<keyword id="KW-0690">Ribosome biogenesis</keyword>
<gene>
    <name evidence="1" type="primary">der</name>
    <name type="synonym">engA</name>
    <name type="ordered locus">Plav_3492</name>
</gene>
<name>DER_PARL1</name>